<protein>
    <recommendedName>
        <fullName evidence="1">Tryptophan synthase alpha chain</fullName>
        <ecNumber evidence="1">4.2.1.20</ecNumber>
    </recommendedName>
</protein>
<accession>Q7VGA8</accession>
<reference key="1">
    <citation type="journal article" date="2003" name="Proc. Natl. Acad. Sci. U.S.A.">
        <title>The complete genome sequence of the carcinogenic bacterium Helicobacter hepaticus.</title>
        <authorList>
            <person name="Suerbaum S."/>
            <person name="Josenhans C."/>
            <person name="Sterzenbach T."/>
            <person name="Drescher B."/>
            <person name="Brandt P."/>
            <person name="Bell M."/>
            <person name="Droege M."/>
            <person name="Fartmann B."/>
            <person name="Fischer H.-P."/>
            <person name="Ge Z."/>
            <person name="Hoerster A."/>
            <person name="Holland R."/>
            <person name="Klein K."/>
            <person name="Koenig J."/>
            <person name="Macko L."/>
            <person name="Mendz G.L."/>
            <person name="Nyakatura G."/>
            <person name="Schauer D.B."/>
            <person name="Shen Z."/>
            <person name="Weber J."/>
            <person name="Frosch M."/>
            <person name="Fox J.G."/>
        </authorList>
    </citation>
    <scope>NUCLEOTIDE SEQUENCE [LARGE SCALE GENOMIC DNA]</scope>
    <source>
        <strain>ATCC 51449 / 3B1</strain>
    </source>
</reference>
<comment type="function">
    <text evidence="1">The alpha subunit is responsible for the aldol cleavage of indoleglycerol phosphate to indole and glyceraldehyde 3-phosphate.</text>
</comment>
<comment type="catalytic activity">
    <reaction evidence="1">
        <text>(1S,2R)-1-C-(indol-3-yl)glycerol 3-phosphate + L-serine = D-glyceraldehyde 3-phosphate + L-tryptophan + H2O</text>
        <dbReference type="Rhea" id="RHEA:10532"/>
        <dbReference type="ChEBI" id="CHEBI:15377"/>
        <dbReference type="ChEBI" id="CHEBI:33384"/>
        <dbReference type="ChEBI" id="CHEBI:57912"/>
        <dbReference type="ChEBI" id="CHEBI:58866"/>
        <dbReference type="ChEBI" id="CHEBI:59776"/>
        <dbReference type="EC" id="4.2.1.20"/>
    </reaction>
</comment>
<comment type="pathway">
    <text evidence="1">Amino-acid biosynthesis; L-tryptophan biosynthesis; L-tryptophan from chorismate: step 5/5.</text>
</comment>
<comment type="subunit">
    <text evidence="1">Tetramer of two alpha and two beta chains.</text>
</comment>
<comment type="similarity">
    <text evidence="1">Belongs to the TrpA family.</text>
</comment>
<keyword id="KW-0028">Amino-acid biosynthesis</keyword>
<keyword id="KW-0057">Aromatic amino acid biosynthesis</keyword>
<keyword id="KW-0456">Lyase</keyword>
<keyword id="KW-1185">Reference proteome</keyword>
<keyword id="KW-0822">Tryptophan biosynthesis</keyword>
<feature type="chain" id="PRO_0000098788" description="Tryptophan synthase alpha chain">
    <location>
        <begin position="1"/>
        <end position="267"/>
    </location>
</feature>
<feature type="active site" description="Proton acceptor" evidence="1">
    <location>
        <position position="39"/>
    </location>
</feature>
<feature type="active site" description="Proton acceptor" evidence="1">
    <location>
        <position position="50"/>
    </location>
</feature>
<dbReference type="EC" id="4.2.1.20" evidence="1"/>
<dbReference type="EMBL" id="AE017125">
    <property type="protein sequence ID" value="AAP78011.1"/>
    <property type="molecule type" value="Genomic_DNA"/>
</dbReference>
<dbReference type="RefSeq" id="WP_011116254.1">
    <property type="nucleotide sequence ID" value="NC_004917.1"/>
</dbReference>
<dbReference type="SMR" id="Q7VGA8"/>
<dbReference type="STRING" id="235279.HH_1414"/>
<dbReference type="KEGG" id="hhe:HH_1414"/>
<dbReference type="eggNOG" id="COG0159">
    <property type="taxonomic scope" value="Bacteria"/>
</dbReference>
<dbReference type="HOGENOM" id="CLU_016734_0_0_7"/>
<dbReference type="OrthoDB" id="9804578at2"/>
<dbReference type="UniPathway" id="UPA00035">
    <property type="reaction ID" value="UER00044"/>
</dbReference>
<dbReference type="Proteomes" id="UP000002495">
    <property type="component" value="Chromosome"/>
</dbReference>
<dbReference type="GO" id="GO:0005829">
    <property type="term" value="C:cytosol"/>
    <property type="evidence" value="ECO:0007669"/>
    <property type="project" value="TreeGrafter"/>
</dbReference>
<dbReference type="GO" id="GO:0004834">
    <property type="term" value="F:tryptophan synthase activity"/>
    <property type="evidence" value="ECO:0007669"/>
    <property type="project" value="UniProtKB-UniRule"/>
</dbReference>
<dbReference type="CDD" id="cd04724">
    <property type="entry name" value="Tryptophan_synthase_alpha"/>
    <property type="match status" value="1"/>
</dbReference>
<dbReference type="Gene3D" id="3.20.20.70">
    <property type="entry name" value="Aldolase class I"/>
    <property type="match status" value="1"/>
</dbReference>
<dbReference type="HAMAP" id="MF_00131">
    <property type="entry name" value="Trp_synth_alpha"/>
    <property type="match status" value="1"/>
</dbReference>
<dbReference type="InterPro" id="IPR013785">
    <property type="entry name" value="Aldolase_TIM"/>
</dbReference>
<dbReference type="InterPro" id="IPR011060">
    <property type="entry name" value="RibuloseP-bd_barrel"/>
</dbReference>
<dbReference type="InterPro" id="IPR002028">
    <property type="entry name" value="Trp_synthase_suA"/>
</dbReference>
<dbReference type="NCBIfam" id="TIGR00262">
    <property type="entry name" value="trpA"/>
    <property type="match status" value="1"/>
</dbReference>
<dbReference type="PANTHER" id="PTHR43406:SF1">
    <property type="entry name" value="TRYPTOPHAN SYNTHASE ALPHA CHAIN, CHLOROPLASTIC"/>
    <property type="match status" value="1"/>
</dbReference>
<dbReference type="PANTHER" id="PTHR43406">
    <property type="entry name" value="TRYPTOPHAN SYNTHASE, ALPHA CHAIN"/>
    <property type="match status" value="1"/>
</dbReference>
<dbReference type="Pfam" id="PF00290">
    <property type="entry name" value="Trp_syntA"/>
    <property type="match status" value="1"/>
</dbReference>
<dbReference type="SUPFAM" id="SSF51366">
    <property type="entry name" value="Ribulose-phoshate binding barrel"/>
    <property type="match status" value="1"/>
</dbReference>
<organism>
    <name type="scientific">Helicobacter hepaticus (strain ATCC 51449 / 3B1)</name>
    <dbReference type="NCBI Taxonomy" id="235279"/>
    <lineage>
        <taxon>Bacteria</taxon>
        <taxon>Pseudomonadati</taxon>
        <taxon>Campylobacterota</taxon>
        <taxon>Epsilonproteobacteria</taxon>
        <taxon>Campylobacterales</taxon>
        <taxon>Helicobacteraceae</taxon>
        <taxon>Helicobacter</taxon>
    </lineage>
</organism>
<name>TRPA_HELHP</name>
<evidence type="ECO:0000255" key="1">
    <source>
        <dbReference type="HAMAP-Rule" id="MF_00131"/>
    </source>
</evidence>
<proteinExistence type="inferred from homology"/>
<sequence>MSAQPKPQLMGHIIAGYPSFESSLYAALGICQAGASYLEVQFPFSDPNADGRVIEEACNKSIAQGFKVAQGFKLLHTLSQHINQDNKQPTRLIIMTYANLIFHYGIEAFIKEAKKCGVWGIIAPDLPIESDESLRILAKKHHIRIISLIAPKVSISRIKKIAKISDEIVYVVARAGITGEKTHIDKALFEWIRLIQKHCKKPIALGFGINSYEQVAALKDKVDIIVAGSYFVRFISELSTQSQLSPQDYMHKLQAHAQMLMGWDINE</sequence>
<gene>
    <name evidence="1" type="primary">trpA</name>
    <name type="ordered locus">HH_1414</name>
</gene>